<dbReference type="EC" id="3.1.3.-"/>
<dbReference type="EMBL" id="BC098712">
    <property type="protein sequence ID" value="AAH98712.1"/>
    <property type="molecule type" value="mRNA"/>
</dbReference>
<dbReference type="RefSeq" id="NP_001020821.1">
    <property type="nucleotide sequence ID" value="NM_001025650.1"/>
</dbReference>
<dbReference type="RefSeq" id="XP_008761323.1">
    <property type="nucleotide sequence ID" value="XM_008763101.2"/>
</dbReference>
<dbReference type="SMR" id="Q4KM79"/>
<dbReference type="FunCoup" id="Q4KM79">
    <property type="interactions" value="1922"/>
</dbReference>
<dbReference type="STRING" id="10116.ENSRNOP00000030319"/>
<dbReference type="PhosphoSitePlus" id="Q4KM79"/>
<dbReference type="PaxDb" id="10116-ENSRNOP00000030319"/>
<dbReference type="Ensembl" id="ENSRNOT00000057475.5">
    <property type="protein sequence ID" value="ENSRNOP00000054285.2"/>
    <property type="gene ID" value="ENSRNOG00000045539.3"/>
</dbReference>
<dbReference type="GeneID" id="297412"/>
<dbReference type="KEGG" id="rno:297412"/>
<dbReference type="UCSC" id="RGD:1307038">
    <property type="organism name" value="rat"/>
</dbReference>
<dbReference type="AGR" id="RGD:1307038"/>
<dbReference type="CTD" id="8446"/>
<dbReference type="RGD" id="1307038">
    <property type="gene designation" value="Dusp11"/>
</dbReference>
<dbReference type="eggNOG" id="KOG2386">
    <property type="taxonomic scope" value="Eukaryota"/>
</dbReference>
<dbReference type="GeneTree" id="ENSGT00940000155847"/>
<dbReference type="HOGENOM" id="CLU_057587_1_1_1"/>
<dbReference type="InParanoid" id="Q4KM79"/>
<dbReference type="OMA" id="NRIPERW"/>
<dbReference type="OrthoDB" id="428974at2759"/>
<dbReference type="PRO" id="PR:Q4KM79"/>
<dbReference type="Proteomes" id="UP000002494">
    <property type="component" value="Chromosome 4"/>
</dbReference>
<dbReference type="Bgee" id="ENSRNOG00000022082">
    <property type="expression patterns" value="Expressed in duodenum and 19 other cell types or tissues"/>
</dbReference>
<dbReference type="GO" id="GO:0016607">
    <property type="term" value="C:nuclear speck"/>
    <property type="evidence" value="ECO:0000250"/>
    <property type="project" value="UniProtKB"/>
</dbReference>
<dbReference type="GO" id="GO:0016791">
    <property type="term" value="F:phosphatase activity"/>
    <property type="evidence" value="ECO:0000250"/>
    <property type="project" value="UniProtKB"/>
</dbReference>
<dbReference type="GO" id="GO:0004651">
    <property type="term" value="F:polynucleotide 5'-phosphatase activity"/>
    <property type="evidence" value="ECO:0000250"/>
    <property type="project" value="UniProtKB"/>
</dbReference>
<dbReference type="GO" id="GO:0004725">
    <property type="term" value="F:protein tyrosine phosphatase activity"/>
    <property type="evidence" value="ECO:0000266"/>
    <property type="project" value="RGD"/>
</dbReference>
<dbReference type="GO" id="GO:0003723">
    <property type="term" value="F:RNA binding"/>
    <property type="evidence" value="ECO:0000266"/>
    <property type="project" value="RGD"/>
</dbReference>
<dbReference type="CDD" id="cd17665">
    <property type="entry name" value="DSP_DUSP11"/>
    <property type="match status" value="1"/>
</dbReference>
<dbReference type="FunFam" id="3.90.190.10:FF:000064">
    <property type="entry name" value="RNA/RNP complex-1-interacting phosphatase homolog"/>
    <property type="match status" value="1"/>
</dbReference>
<dbReference type="Gene3D" id="3.90.190.10">
    <property type="entry name" value="Protein tyrosine phosphatase superfamily"/>
    <property type="match status" value="1"/>
</dbReference>
<dbReference type="InterPro" id="IPR000340">
    <property type="entry name" value="Dual-sp_phosphatase_cat-dom"/>
</dbReference>
<dbReference type="InterPro" id="IPR051029">
    <property type="entry name" value="mRNA_Capping_Enz/RNA_Phosphat"/>
</dbReference>
<dbReference type="InterPro" id="IPR029021">
    <property type="entry name" value="Prot-tyrosine_phosphatase-like"/>
</dbReference>
<dbReference type="InterPro" id="IPR016130">
    <property type="entry name" value="Tyr_Pase_AS"/>
</dbReference>
<dbReference type="InterPro" id="IPR000387">
    <property type="entry name" value="Tyr_Pase_dom"/>
</dbReference>
<dbReference type="InterPro" id="IPR020422">
    <property type="entry name" value="TYR_PHOSPHATASE_DUAL_dom"/>
</dbReference>
<dbReference type="PANTHER" id="PTHR10367">
    <property type="entry name" value="MRNA-CAPPING ENZYME"/>
    <property type="match status" value="1"/>
</dbReference>
<dbReference type="PANTHER" id="PTHR10367:SF18">
    <property type="entry name" value="RNA_RNP COMPLEX-1-INTERACTING PHOSPHATASE"/>
    <property type="match status" value="1"/>
</dbReference>
<dbReference type="Pfam" id="PF00782">
    <property type="entry name" value="DSPc"/>
    <property type="match status" value="1"/>
</dbReference>
<dbReference type="SMART" id="SM00195">
    <property type="entry name" value="DSPc"/>
    <property type="match status" value="1"/>
</dbReference>
<dbReference type="SUPFAM" id="SSF52799">
    <property type="entry name" value="(Phosphotyrosine protein) phosphatases II"/>
    <property type="match status" value="1"/>
</dbReference>
<dbReference type="PROSITE" id="PS00383">
    <property type="entry name" value="TYR_PHOSPHATASE_1"/>
    <property type="match status" value="1"/>
</dbReference>
<dbReference type="PROSITE" id="PS50056">
    <property type="entry name" value="TYR_PHOSPHATASE_2"/>
    <property type="match status" value="1"/>
</dbReference>
<dbReference type="PROSITE" id="PS50054">
    <property type="entry name" value="TYR_PHOSPHATASE_DUAL"/>
    <property type="match status" value="1"/>
</dbReference>
<organism>
    <name type="scientific">Rattus norvegicus</name>
    <name type="common">Rat</name>
    <dbReference type="NCBI Taxonomy" id="10116"/>
    <lineage>
        <taxon>Eukaryota</taxon>
        <taxon>Metazoa</taxon>
        <taxon>Chordata</taxon>
        <taxon>Craniata</taxon>
        <taxon>Vertebrata</taxon>
        <taxon>Euteleostomi</taxon>
        <taxon>Mammalia</taxon>
        <taxon>Eutheria</taxon>
        <taxon>Euarchontoglires</taxon>
        <taxon>Glires</taxon>
        <taxon>Rodentia</taxon>
        <taxon>Myomorpha</taxon>
        <taxon>Muroidea</taxon>
        <taxon>Muridae</taxon>
        <taxon>Murinae</taxon>
        <taxon>Rattus</taxon>
    </lineage>
</organism>
<evidence type="ECO:0000250" key="1">
    <source>
        <dbReference type="UniProtKB" id="O75319"/>
    </source>
</evidence>
<evidence type="ECO:0000255" key="2"/>
<evidence type="ECO:0000255" key="3">
    <source>
        <dbReference type="PROSITE-ProRule" id="PRU00160"/>
    </source>
</evidence>
<evidence type="ECO:0000256" key="4">
    <source>
        <dbReference type="SAM" id="MobiDB-lite"/>
    </source>
</evidence>
<evidence type="ECO:0000305" key="5"/>
<protein>
    <recommendedName>
        <fullName>RNA/RNP complex-1-interacting phosphatase</fullName>
        <ecNumber>3.1.3.-</ecNumber>
    </recommendedName>
    <alternativeName>
        <fullName>Dual specificity protein phosphatase 11</fullName>
    </alternativeName>
    <alternativeName>
        <fullName>Phosphatase that interacts with RNA/RNP complex 1</fullName>
    </alternativeName>
</protein>
<sequence>MNQWHYGRYSRGRDFTARAPPKKKGKNQIPERWKDYLPVGQRMPGTRFIAFKVPLQKKFEAKLMPEECFSPLDLFNKIQEQNEELGLIIDLTYTQRYYKVEDLPKTISYIKILTVGHQVPDSGTIFQFKSAVKEFLKRNKNNDKLIGVHCTHGLNRTGYLICRYLIDVEGMRPDDAIELFNRCRGHCIERQNYIENLQKRRVRKNQNASASRSGGLEDSAHLTEQVHTTNKPVNKGPKKSRRGGHLESSQHVQTQSSAYSFRKWSQNQSVYQRGFVPPPGPAGEDYSQRRFFWSMRPNGSQATHHKKWIAASYQRPFYPASWEWNV</sequence>
<name>DUS11_RAT</name>
<reference key="1">
    <citation type="journal article" date="2004" name="Genome Res.">
        <title>The status, quality, and expansion of the NIH full-length cDNA project: the Mammalian Gene Collection (MGC).</title>
        <authorList>
            <consortium name="The MGC Project Team"/>
        </authorList>
    </citation>
    <scope>NUCLEOTIDE SEQUENCE [LARGE SCALE MRNA]</scope>
    <source>
        <tissue>Liver</tissue>
    </source>
</reference>
<comment type="function">
    <text evidence="1">Possesses RNA 5'-triphosphatase and diphosphatase activities, but displays a poor protein-tyrosine phosphatase activity. In addition, has phosphatase activity with ATP, ADP and O-methylfluorescein phosphate (in vitro). Binds to RNA. May participate in nuclear mRNA metabolism.</text>
</comment>
<comment type="subunit">
    <text evidence="1">Monomer. May interact with SFRS7 and SFRS9/SRP30C.</text>
</comment>
<comment type="subcellular location">
    <subcellularLocation>
        <location evidence="1">Nucleus</location>
    </subcellularLocation>
    <subcellularLocation>
        <location evidence="1">Nucleus speckle</location>
    </subcellularLocation>
</comment>
<comment type="similarity">
    <text evidence="5">Belongs to the protein-tyrosine phosphatase family. Non-receptor class dual specificity subfamily.</text>
</comment>
<keyword id="KW-0378">Hydrolase</keyword>
<keyword id="KW-0539">Nucleus</keyword>
<keyword id="KW-0904">Protein phosphatase</keyword>
<keyword id="KW-1185">Reference proteome</keyword>
<keyword id="KW-0694">RNA-binding</keyword>
<feature type="chain" id="PRO_0000379777" description="RNA/RNP complex-1-interacting phosphatase">
    <location>
        <begin position="1"/>
        <end position="326"/>
    </location>
</feature>
<feature type="domain" description="Tyrosine-protein phosphatase" evidence="3">
    <location>
        <begin position="59"/>
        <end position="206"/>
    </location>
</feature>
<feature type="region of interest" description="Disordered" evidence="4">
    <location>
        <begin position="1"/>
        <end position="28"/>
    </location>
</feature>
<feature type="region of interest" description="Disordered" evidence="4">
    <location>
        <begin position="200"/>
        <end position="258"/>
    </location>
</feature>
<feature type="compositionally biased region" description="Polar residues" evidence="4">
    <location>
        <begin position="247"/>
        <end position="258"/>
    </location>
</feature>
<feature type="active site" description="Phosphocysteine intermediate" evidence="3">
    <location>
        <position position="150"/>
    </location>
</feature>
<feature type="active site" description="Proton donor/acceptor" evidence="2">
    <location>
        <position position="156"/>
    </location>
</feature>
<feature type="binding site" evidence="1">
    <location>
        <begin position="151"/>
        <end position="156"/>
    </location>
    <ligand>
        <name>substrate</name>
    </ligand>
</feature>
<gene>
    <name type="primary">Dusp11</name>
    <name type="synonym">Pir1</name>
</gene>
<accession>Q4KM79</accession>
<proteinExistence type="evidence at transcript level"/>